<organism>
    <name type="scientific">Francisella tularensis subsp. novicida (strain U112)</name>
    <dbReference type="NCBI Taxonomy" id="401614"/>
    <lineage>
        <taxon>Bacteria</taxon>
        <taxon>Pseudomonadati</taxon>
        <taxon>Pseudomonadota</taxon>
        <taxon>Gammaproteobacteria</taxon>
        <taxon>Thiotrichales</taxon>
        <taxon>Francisellaceae</taxon>
        <taxon>Francisella</taxon>
    </lineage>
</organism>
<evidence type="ECO:0000255" key="1">
    <source>
        <dbReference type="HAMAP-Rule" id="MF_00812"/>
    </source>
</evidence>
<protein>
    <recommendedName>
        <fullName evidence="1">Thiopurine S-methyltransferase</fullName>
        <ecNumber evidence="1">2.1.1.67</ecNumber>
    </recommendedName>
    <alternativeName>
        <fullName evidence="1">Thiopurine methyltransferase</fullName>
    </alternativeName>
</protein>
<comment type="catalytic activity">
    <reaction evidence="1">
        <text>S-adenosyl-L-methionine + a thiopurine = S-adenosyl-L-homocysteine + a thiopurine S-methylether.</text>
        <dbReference type="EC" id="2.1.1.67"/>
    </reaction>
</comment>
<comment type="subcellular location">
    <subcellularLocation>
        <location evidence="1">Cytoplasm</location>
    </subcellularLocation>
</comment>
<comment type="similarity">
    <text evidence="1">Belongs to the class I-like SAM-binding methyltransferase superfamily. TPMT family.</text>
</comment>
<sequence length="226" mass="26339">MNKLETNNNQYWLDRWQNDDVGFCQESPNEFLVKHFSKLNINDSSVCLIPMCGCSIDMLFFLSKGVKVVGIELSEKAVLSFFSQNSINYEVIHGNDYKLYKGDDIEIYVADIFNLPKIANNLPAFDIWYDRGAYIALPNDLRTNYAKMMLEVCPNNTQILLLVMEHDKKSQTPPYSVTQAELIKNFSAKIKFELIDSKQRDNIPDYRKAEGMTKQYYTTYLRKKQY</sequence>
<gene>
    <name evidence="1" type="primary">tpm</name>
    <name type="ordered locus">FTN_0023</name>
</gene>
<reference key="1">
    <citation type="journal article" date="2007" name="Genome Biol.">
        <title>Comparison of Francisella tularensis genomes reveals evolutionary events associated with the emergence of human pathogenic strains.</title>
        <authorList>
            <person name="Rohmer L."/>
            <person name="Fong C."/>
            <person name="Abmayr S."/>
            <person name="Wasnick M."/>
            <person name="Larson Freeman T.J."/>
            <person name="Radey M."/>
            <person name="Guina T."/>
            <person name="Svensson K."/>
            <person name="Hayden H.S."/>
            <person name="Jacobs M."/>
            <person name="Gallagher L.A."/>
            <person name="Manoil C."/>
            <person name="Ernst R.K."/>
            <person name="Drees B."/>
            <person name="Buckley D."/>
            <person name="Haugen E."/>
            <person name="Bovee D."/>
            <person name="Zhou Y."/>
            <person name="Chang J."/>
            <person name="Levy R."/>
            <person name="Lim R."/>
            <person name="Gillett W."/>
            <person name="Guenthener D."/>
            <person name="Kang A."/>
            <person name="Shaffer S.A."/>
            <person name="Taylor G."/>
            <person name="Chen J."/>
            <person name="Gallis B."/>
            <person name="D'Argenio D.A."/>
            <person name="Forsman M."/>
            <person name="Olson M.V."/>
            <person name="Goodlett D.R."/>
            <person name="Kaul R."/>
            <person name="Miller S.I."/>
            <person name="Brittnacher M.J."/>
        </authorList>
    </citation>
    <scope>NUCLEOTIDE SEQUENCE [LARGE SCALE GENOMIC DNA]</scope>
    <source>
        <strain>U112</strain>
    </source>
</reference>
<accession>A0Q3W9</accession>
<feature type="chain" id="PRO_1000047204" description="Thiopurine S-methyltransferase">
    <location>
        <begin position="1"/>
        <end position="226"/>
    </location>
</feature>
<feature type="binding site" evidence="1">
    <location>
        <position position="16"/>
    </location>
    <ligand>
        <name>S-adenosyl-L-methionine</name>
        <dbReference type="ChEBI" id="CHEBI:59789"/>
    </ligand>
</feature>
<feature type="binding site" evidence="1">
    <location>
        <position position="51"/>
    </location>
    <ligand>
        <name>S-adenosyl-L-methionine</name>
        <dbReference type="ChEBI" id="CHEBI:59789"/>
    </ligand>
</feature>
<feature type="binding site" evidence="1">
    <location>
        <position position="72"/>
    </location>
    <ligand>
        <name>S-adenosyl-L-methionine</name>
        <dbReference type="ChEBI" id="CHEBI:59789"/>
    </ligand>
</feature>
<feature type="binding site" evidence="1">
    <location>
        <position position="131"/>
    </location>
    <ligand>
        <name>S-adenosyl-L-methionine</name>
        <dbReference type="ChEBI" id="CHEBI:59789"/>
    </ligand>
</feature>
<keyword id="KW-0963">Cytoplasm</keyword>
<keyword id="KW-0489">Methyltransferase</keyword>
<keyword id="KW-0949">S-adenosyl-L-methionine</keyword>
<keyword id="KW-0808">Transferase</keyword>
<proteinExistence type="inferred from homology"/>
<name>TPMT_FRATN</name>
<dbReference type="EC" id="2.1.1.67" evidence="1"/>
<dbReference type="EMBL" id="CP000439">
    <property type="protein sequence ID" value="ABK88934.1"/>
    <property type="molecule type" value="Genomic_DNA"/>
</dbReference>
<dbReference type="RefSeq" id="WP_003040820.1">
    <property type="nucleotide sequence ID" value="NC_008601.1"/>
</dbReference>
<dbReference type="SMR" id="A0Q3W9"/>
<dbReference type="KEGG" id="ftn:FTN_0023"/>
<dbReference type="KEGG" id="ftx:AW25_179"/>
<dbReference type="BioCyc" id="FTUL401614:G1G75-24-MONOMER"/>
<dbReference type="Proteomes" id="UP000000762">
    <property type="component" value="Chromosome"/>
</dbReference>
<dbReference type="GO" id="GO:0005737">
    <property type="term" value="C:cytoplasm"/>
    <property type="evidence" value="ECO:0007669"/>
    <property type="project" value="UniProtKB-SubCell"/>
</dbReference>
<dbReference type="GO" id="GO:0008119">
    <property type="term" value="F:thiopurine S-methyltransferase activity"/>
    <property type="evidence" value="ECO:0007669"/>
    <property type="project" value="UniProtKB-UniRule"/>
</dbReference>
<dbReference type="GO" id="GO:0032259">
    <property type="term" value="P:methylation"/>
    <property type="evidence" value="ECO:0007669"/>
    <property type="project" value="UniProtKB-KW"/>
</dbReference>
<dbReference type="FunFam" id="3.40.50.150:FF:000101">
    <property type="entry name" value="Thiopurine S-methyltransferase"/>
    <property type="match status" value="1"/>
</dbReference>
<dbReference type="Gene3D" id="3.40.50.150">
    <property type="entry name" value="Vaccinia Virus protein VP39"/>
    <property type="match status" value="1"/>
</dbReference>
<dbReference type="HAMAP" id="MF_00812">
    <property type="entry name" value="Thiopur_methtran"/>
    <property type="match status" value="1"/>
</dbReference>
<dbReference type="InterPro" id="IPR029063">
    <property type="entry name" value="SAM-dependent_MTases_sf"/>
</dbReference>
<dbReference type="InterPro" id="IPR025835">
    <property type="entry name" value="Thiopurine_S-MeTrfase"/>
</dbReference>
<dbReference type="InterPro" id="IPR008854">
    <property type="entry name" value="TPMT"/>
</dbReference>
<dbReference type="NCBIfam" id="NF009733">
    <property type="entry name" value="PRK13256.1"/>
    <property type="match status" value="1"/>
</dbReference>
<dbReference type="PANTHER" id="PTHR10259">
    <property type="entry name" value="THIOPURINE S-METHYLTRANSFERASE"/>
    <property type="match status" value="1"/>
</dbReference>
<dbReference type="PANTHER" id="PTHR10259:SF11">
    <property type="entry name" value="THIOPURINE S-METHYLTRANSFERASE"/>
    <property type="match status" value="1"/>
</dbReference>
<dbReference type="Pfam" id="PF05724">
    <property type="entry name" value="TPMT"/>
    <property type="match status" value="1"/>
</dbReference>
<dbReference type="PIRSF" id="PIRSF023956">
    <property type="entry name" value="Thiopurine_S-methyltransferase"/>
    <property type="match status" value="1"/>
</dbReference>
<dbReference type="SUPFAM" id="SSF53335">
    <property type="entry name" value="S-adenosyl-L-methionine-dependent methyltransferases"/>
    <property type="match status" value="1"/>
</dbReference>
<dbReference type="PROSITE" id="PS51585">
    <property type="entry name" value="SAM_MT_TPMT"/>
    <property type="match status" value="1"/>
</dbReference>